<reference key="1">
    <citation type="journal article" date="2002" name="J. Bacteriol.">
        <title>Whole-genome comparison of Mycobacterium tuberculosis clinical and laboratory strains.</title>
        <authorList>
            <person name="Fleischmann R.D."/>
            <person name="Alland D."/>
            <person name="Eisen J.A."/>
            <person name="Carpenter L."/>
            <person name="White O."/>
            <person name="Peterson J.D."/>
            <person name="DeBoy R.T."/>
            <person name="Dodson R.J."/>
            <person name="Gwinn M.L."/>
            <person name="Haft D.H."/>
            <person name="Hickey E.K."/>
            <person name="Kolonay J.F."/>
            <person name="Nelson W.C."/>
            <person name="Umayam L.A."/>
            <person name="Ermolaeva M.D."/>
            <person name="Salzberg S.L."/>
            <person name="Delcher A."/>
            <person name="Utterback T.R."/>
            <person name="Weidman J.F."/>
            <person name="Khouri H.M."/>
            <person name="Gill J."/>
            <person name="Mikula A."/>
            <person name="Bishai W."/>
            <person name="Jacobs W.R. Jr."/>
            <person name="Venter J.C."/>
            <person name="Fraser C.M."/>
        </authorList>
    </citation>
    <scope>NUCLEOTIDE SEQUENCE [LARGE SCALE GENOMIC DNA]</scope>
    <source>
        <strain>CDC 1551 / Oshkosh</strain>
    </source>
</reference>
<dbReference type="EMBL" id="AE000516">
    <property type="protein sequence ID" value="AAK44745.1"/>
    <property type="molecule type" value="Genomic_DNA"/>
</dbReference>
<dbReference type="PIR" id="C70546">
    <property type="entry name" value="C70546"/>
</dbReference>
<dbReference type="PIR" id="H70745">
    <property type="entry name" value="H70745"/>
</dbReference>
<dbReference type="RefSeq" id="WP_003402607.1">
    <property type="nucleotide sequence ID" value="NZ_KK341227.1"/>
</dbReference>
<dbReference type="SMR" id="P9WKT2"/>
<dbReference type="KEGG" id="mtc:MT0522"/>
<dbReference type="PATRIC" id="fig|83331.31.peg.553"/>
<dbReference type="HOGENOM" id="CLU_007383_0_2_11"/>
<dbReference type="Proteomes" id="UP000001020">
    <property type="component" value="Chromosome"/>
</dbReference>
<dbReference type="CDD" id="cd05240">
    <property type="entry name" value="UDP_G4E_3_SDR_e"/>
    <property type="match status" value="1"/>
</dbReference>
<dbReference type="FunFam" id="3.40.50.720:FF:000342">
    <property type="entry name" value="NAD dependent epimerase/dehydratase family protein"/>
    <property type="match status" value="1"/>
</dbReference>
<dbReference type="Gene3D" id="3.40.50.720">
    <property type="entry name" value="NAD(P)-binding Rossmann-like Domain"/>
    <property type="match status" value="1"/>
</dbReference>
<dbReference type="InterPro" id="IPR001509">
    <property type="entry name" value="Epimerase_deHydtase"/>
</dbReference>
<dbReference type="InterPro" id="IPR050177">
    <property type="entry name" value="Lipid_A_modif_metabolic_enz"/>
</dbReference>
<dbReference type="InterPro" id="IPR036291">
    <property type="entry name" value="NAD(P)-bd_dom_sf"/>
</dbReference>
<dbReference type="PANTHER" id="PTHR43245">
    <property type="entry name" value="BIFUNCTIONAL POLYMYXIN RESISTANCE PROTEIN ARNA"/>
    <property type="match status" value="1"/>
</dbReference>
<dbReference type="PANTHER" id="PTHR43245:SF52">
    <property type="entry name" value="NAD-DEPENDENT EPIMERASE_DEHYDRATASE"/>
    <property type="match status" value="1"/>
</dbReference>
<dbReference type="Pfam" id="PF01370">
    <property type="entry name" value="Epimerase"/>
    <property type="match status" value="1"/>
</dbReference>
<dbReference type="SUPFAM" id="SSF51735">
    <property type="entry name" value="NAD(P)-binding Rossmann-fold domains"/>
    <property type="match status" value="1"/>
</dbReference>
<comment type="similarity">
    <text evidence="1">Belongs to the NAD(P)-dependent epimerase/dehydratase family.</text>
</comment>
<keyword id="KW-1185">Reference proteome</keyword>
<proteinExistence type="inferred from homology"/>
<feature type="chain" id="PRO_0000427599" description="Uncharacterized protein MT0522">
    <location>
        <begin position="1"/>
        <end position="376"/>
    </location>
</feature>
<name>Y501_MYCTO</name>
<accession>P9WKT2</accession>
<accession>L0T6P0</accession>
<accession>O06402</accession>
<accession>P0A5D1</accession>
<accession>Q11166</accession>
<evidence type="ECO:0000305" key="1"/>
<protein>
    <recommendedName>
        <fullName>Uncharacterized protein MT0522</fullName>
    </recommendedName>
</protein>
<gene>
    <name type="ordered locus">MT0522</name>
</gene>
<sequence>MSSSNGRGGAGGVGGSSEHPQYPKVVLVTGACRFLGGYLTARLAQNPLINRVIAVDAIAPSKDMLRRMGRAEFVRADIRNPFIAKVIRNGEVDTVVHAAAASYAPRSGGSAALKELNVMGAMQLFAACQKAPSVRRVVLKSTSEVYGSSPHDPVMFTEDSSSRRPFSQGFPKDSLDIEGYVRALGRRRPDIAVTILRLANMIGPAMDTTLSRYLAGPLVPTIFGRDARLQLLHEQDALGALERAAMAGKAGTFNIGADGILMLSQAIRRAGRIPVPVPGFGVWALDSLRRANHYTELNREQFAYLSYGRVMDTTRMRVELGYQPKWTTVEAFDDYFRGRGLTPIIDPHRVRSWEGRAVGLAQRWGSRNPIPWSGLR</sequence>
<organism>
    <name type="scientific">Mycobacterium tuberculosis (strain CDC 1551 / Oshkosh)</name>
    <dbReference type="NCBI Taxonomy" id="83331"/>
    <lineage>
        <taxon>Bacteria</taxon>
        <taxon>Bacillati</taxon>
        <taxon>Actinomycetota</taxon>
        <taxon>Actinomycetes</taxon>
        <taxon>Mycobacteriales</taxon>
        <taxon>Mycobacteriaceae</taxon>
        <taxon>Mycobacterium</taxon>
        <taxon>Mycobacterium tuberculosis complex</taxon>
    </lineage>
</organism>